<dbReference type="EC" id="2.1.1.199" evidence="1"/>
<dbReference type="EMBL" id="CP000048">
    <property type="protein sequence ID" value="AAX16823.1"/>
    <property type="molecule type" value="Genomic_DNA"/>
</dbReference>
<dbReference type="RefSeq" id="WP_012422080.1">
    <property type="nucleotide sequence ID" value="NZ_CP073136.1"/>
</dbReference>
<dbReference type="SMR" id="B2S017"/>
<dbReference type="GeneID" id="71843120"/>
<dbReference type="KEGG" id="bhr:BH0306"/>
<dbReference type="HOGENOM" id="CLU_038422_1_1_12"/>
<dbReference type="Proteomes" id="UP000008834">
    <property type="component" value="Chromosome"/>
</dbReference>
<dbReference type="GO" id="GO:0005737">
    <property type="term" value="C:cytoplasm"/>
    <property type="evidence" value="ECO:0007669"/>
    <property type="project" value="UniProtKB-SubCell"/>
</dbReference>
<dbReference type="GO" id="GO:0071424">
    <property type="term" value="F:rRNA (cytosine-N4-)-methyltransferase activity"/>
    <property type="evidence" value="ECO:0007669"/>
    <property type="project" value="UniProtKB-UniRule"/>
</dbReference>
<dbReference type="GO" id="GO:0070475">
    <property type="term" value="P:rRNA base methylation"/>
    <property type="evidence" value="ECO:0007669"/>
    <property type="project" value="UniProtKB-UniRule"/>
</dbReference>
<dbReference type="Gene3D" id="1.10.150.170">
    <property type="entry name" value="Putative methyltransferase TM0872, insert domain"/>
    <property type="match status" value="1"/>
</dbReference>
<dbReference type="Gene3D" id="3.40.50.150">
    <property type="entry name" value="Vaccinia Virus protein VP39"/>
    <property type="match status" value="1"/>
</dbReference>
<dbReference type="HAMAP" id="MF_01007">
    <property type="entry name" value="16SrRNA_methyltr_H"/>
    <property type="match status" value="1"/>
</dbReference>
<dbReference type="InterPro" id="IPR002903">
    <property type="entry name" value="RsmH"/>
</dbReference>
<dbReference type="InterPro" id="IPR023397">
    <property type="entry name" value="SAM-dep_MeTrfase_MraW_recog"/>
</dbReference>
<dbReference type="InterPro" id="IPR029063">
    <property type="entry name" value="SAM-dependent_MTases_sf"/>
</dbReference>
<dbReference type="NCBIfam" id="TIGR00006">
    <property type="entry name" value="16S rRNA (cytosine(1402)-N(4))-methyltransferase RsmH"/>
    <property type="match status" value="1"/>
</dbReference>
<dbReference type="PANTHER" id="PTHR11265:SF0">
    <property type="entry name" value="12S RRNA N4-METHYLCYTIDINE METHYLTRANSFERASE"/>
    <property type="match status" value="1"/>
</dbReference>
<dbReference type="PANTHER" id="PTHR11265">
    <property type="entry name" value="S-ADENOSYL-METHYLTRANSFERASE MRAW"/>
    <property type="match status" value="1"/>
</dbReference>
<dbReference type="Pfam" id="PF01795">
    <property type="entry name" value="Methyltransf_5"/>
    <property type="match status" value="1"/>
</dbReference>
<dbReference type="PIRSF" id="PIRSF004486">
    <property type="entry name" value="MraW"/>
    <property type="match status" value="1"/>
</dbReference>
<dbReference type="SUPFAM" id="SSF81799">
    <property type="entry name" value="Putative methyltransferase TM0872, insert domain"/>
    <property type="match status" value="1"/>
</dbReference>
<dbReference type="SUPFAM" id="SSF53335">
    <property type="entry name" value="S-adenosyl-L-methionine-dependent methyltransferases"/>
    <property type="match status" value="1"/>
</dbReference>
<sequence length="297" mass="34239">MGNIFHTPVLLDEIINLLEIVYVNDGFIFVDCTLGEGGHSSAVLRKYQNISVIGIERDDIILNRAKEFLVEFKGKVSYFNAWFDDFFSEYSLSSKANFILADLGISMFHYKMSGRGFSFFEDERLDMRLNPGAGGLSAYDIVNTFDKVRLENLIYEFGGEHYSKRIVSSILEYRKIKKIKTSRELQGIISKAYPRIKLKINPATKTFQALRIYVNDELFRLKRSLPLWVGSLSRNGILAIITFHSLEDKIVKEFFKGLSKEQYCILTKKPIIASFEEKRCNNASRSAKLRAIRKLYE</sequence>
<gene>
    <name evidence="1" type="primary">rsmH</name>
    <name type="synonym">mraW</name>
    <name type="ordered locus">BH0306</name>
</gene>
<proteinExistence type="inferred from homology"/>
<feature type="chain" id="PRO_0000386754" description="Ribosomal RNA small subunit methyltransferase H">
    <location>
        <begin position="1"/>
        <end position="297"/>
    </location>
</feature>
<feature type="binding site" evidence="1">
    <location>
        <begin position="37"/>
        <end position="39"/>
    </location>
    <ligand>
        <name>S-adenosyl-L-methionine</name>
        <dbReference type="ChEBI" id="CHEBI:59789"/>
    </ligand>
</feature>
<feature type="binding site" evidence="1">
    <location>
        <position position="56"/>
    </location>
    <ligand>
        <name>S-adenosyl-L-methionine</name>
        <dbReference type="ChEBI" id="CHEBI:59789"/>
    </ligand>
</feature>
<feature type="binding site" evidence="1">
    <location>
        <position position="87"/>
    </location>
    <ligand>
        <name>S-adenosyl-L-methionine</name>
        <dbReference type="ChEBI" id="CHEBI:59789"/>
    </ligand>
</feature>
<feature type="binding site" evidence="1">
    <location>
        <position position="102"/>
    </location>
    <ligand>
        <name>S-adenosyl-L-methionine</name>
        <dbReference type="ChEBI" id="CHEBI:59789"/>
    </ligand>
</feature>
<feature type="binding site" evidence="1">
    <location>
        <position position="109"/>
    </location>
    <ligand>
        <name>S-adenosyl-L-methionine</name>
        <dbReference type="ChEBI" id="CHEBI:59789"/>
    </ligand>
</feature>
<comment type="function">
    <text evidence="1">Specifically methylates the N4 position of cytidine in position 1402 (C1402) of 16S rRNA.</text>
</comment>
<comment type="catalytic activity">
    <reaction evidence="1">
        <text>cytidine(1402) in 16S rRNA + S-adenosyl-L-methionine = N(4)-methylcytidine(1402) in 16S rRNA + S-adenosyl-L-homocysteine + H(+)</text>
        <dbReference type="Rhea" id="RHEA:42928"/>
        <dbReference type="Rhea" id="RHEA-COMP:10286"/>
        <dbReference type="Rhea" id="RHEA-COMP:10287"/>
        <dbReference type="ChEBI" id="CHEBI:15378"/>
        <dbReference type="ChEBI" id="CHEBI:57856"/>
        <dbReference type="ChEBI" id="CHEBI:59789"/>
        <dbReference type="ChEBI" id="CHEBI:74506"/>
        <dbReference type="ChEBI" id="CHEBI:82748"/>
        <dbReference type="EC" id="2.1.1.199"/>
    </reaction>
</comment>
<comment type="subcellular location">
    <subcellularLocation>
        <location evidence="1">Cytoplasm</location>
    </subcellularLocation>
</comment>
<comment type="similarity">
    <text evidence="1">Belongs to the methyltransferase superfamily. RsmH family.</text>
</comment>
<protein>
    <recommendedName>
        <fullName evidence="1">Ribosomal RNA small subunit methyltransferase H</fullName>
        <ecNumber evidence="1">2.1.1.199</ecNumber>
    </recommendedName>
    <alternativeName>
        <fullName evidence="1">16S rRNA m(4)C1402 methyltransferase</fullName>
    </alternativeName>
    <alternativeName>
        <fullName evidence="1">rRNA (cytosine-N(4)-)-methyltransferase RsmH</fullName>
    </alternativeName>
</protein>
<evidence type="ECO:0000255" key="1">
    <source>
        <dbReference type="HAMAP-Rule" id="MF_01007"/>
    </source>
</evidence>
<organism>
    <name type="scientific">Borrelia hermsii (strain HS1 / DAH)</name>
    <dbReference type="NCBI Taxonomy" id="314723"/>
    <lineage>
        <taxon>Bacteria</taxon>
        <taxon>Pseudomonadati</taxon>
        <taxon>Spirochaetota</taxon>
        <taxon>Spirochaetia</taxon>
        <taxon>Spirochaetales</taxon>
        <taxon>Borreliaceae</taxon>
        <taxon>Borrelia</taxon>
    </lineage>
</organism>
<accession>B2S017</accession>
<keyword id="KW-0963">Cytoplasm</keyword>
<keyword id="KW-0489">Methyltransferase</keyword>
<keyword id="KW-0698">rRNA processing</keyword>
<keyword id="KW-0949">S-adenosyl-L-methionine</keyword>
<keyword id="KW-0808">Transferase</keyword>
<reference key="1">
    <citation type="submission" date="2004-12" db="EMBL/GenBank/DDBJ databases">
        <title>The genome sequence of Borrelia hermsii and Borrelia turicatae: comparative analysis of two agents of endemic N. America relapsing fever.</title>
        <authorList>
            <person name="Porcella S.F."/>
            <person name="Raffel S.J."/>
            <person name="Schrumpf M.E."/>
            <person name="Montgomery B."/>
            <person name="Smith T."/>
            <person name="Schwan T.G."/>
        </authorList>
    </citation>
    <scope>NUCLEOTIDE SEQUENCE [LARGE SCALE GENOMIC DNA]</scope>
    <source>
        <strain>HS1 / DAH</strain>
    </source>
</reference>
<name>RSMH_BORHD</name>